<name>PLSY_CLOD6</name>
<evidence type="ECO:0000255" key="1">
    <source>
        <dbReference type="HAMAP-Rule" id="MF_01043"/>
    </source>
</evidence>
<accession>Q182W4</accession>
<dbReference type="EC" id="2.3.1.275" evidence="1"/>
<dbReference type="EMBL" id="AM180355">
    <property type="protein sequence ID" value="CAJ69517.1"/>
    <property type="molecule type" value="Genomic_DNA"/>
</dbReference>
<dbReference type="RefSeq" id="WP_003426957.1">
    <property type="nucleotide sequence ID" value="NZ_JAUPES010000012.1"/>
</dbReference>
<dbReference type="RefSeq" id="YP_001089142.1">
    <property type="nucleotide sequence ID" value="NC_009089.1"/>
</dbReference>
<dbReference type="SMR" id="Q182W4"/>
<dbReference type="STRING" id="272563.CD630_26310"/>
<dbReference type="EnsemblBacteria" id="CAJ69517">
    <property type="protein sequence ID" value="CAJ69517"/>
    <property type="gene ID" value="CD630_26310"/>
</dbReference>
<dbReference type="GeneID" id="66355033"/>
<dbReference type="KEGG" id="cdf:CD630_26310"/>
<dbReference type="KEGG" id="pdc:CDIF630_02885"/>
<dbReference type="PATRIC" id="fig|272563.120.peg.2774"/>
<dbReference type="eggNOG" id="COG0344">
    <property type="taxonomic scope" value="Bacteria"/>
</dbReference>
<dbReference type="OrthoDB" id="9777124at2"/>
<dbReference type="PhylomeDB" id="Q182W4"/>
<dbReference type="BioCyc" id="PDIF272563:G12WB-2782-MONOMER"/>
<dbReference type="UniPathway" id="UPA00085"/>
<dbReference type="Proteomes" id="UP000001978">
    <property type="component" value="Chromosome"/>
</dbReference>
<dbReference type="GO" id="GO:0005886">
    <property type="term" value="C:plasma membrane"/>
    <property type="evidence" value="ECO:0007669"/>
    <property type="project" value="UniProtKB-SubCell"/>
</dbReference>
<dbReference type="GO" id="GO:0043772">
    <property type="term" value="F:acyl-phosphate glycerol-3-phosphate acyltransferase activity"/>
    <property type="evidence" value="ECO:0007669"/>
    <property type="project" value="UniProtKB-UniRule"/>
</dbReference>
<dbReference type="GO" id="GO:0008654">
    <property type="term" value="P:phospholipid biosynthetic process"/>
    <property type="evidence" value="ECO:0007669"/>
    <property type="project" value="UniProtKB-UniRule"/>
</dbReference>
<dbReference type="HAMAP" id="MF_01043">
    <property type="entry name" value="PlsY"/>
    <property type="match status" value="1"/>
</dbReference>
<dbReference type="InterPro" id="IPR003811">
    <property type="entry name" value="G3P_acylTferase_PlsY"/>
</dbReference>
<dbReference type="NCBIfam" id="TIGR00023">
    <property type="entry name" value="glycerol-3-phosphate 1-O-acyltransferase PlsY"/>
    <property type="match status" value="1"/>
</dbReference>
<dbReference type="PANTHER" id="PTHR30309:SF0">
    <property type="entry name" value="GLYCEROL-3-PHOSPHATE ACYLTRANSFERASE-RELATED"/>
    <property type="match status" value="1"/>
</dbReference>
<dbReference type="PANTHER" id="PTHR30309">
    <property type="entry name" value="INNER MEMBRANE PROTEIN YGIH"/>
    <property type="match status" value="1"/>
</dbReference>
<dbReference type="Pfam" id="PF02660">
    <property type="entry name" value="G3P_acyltransf"/>
    <property type="match status" value="1"/>
</dbReference>
<dbReference type="SMART" id="SM01207">
    <property type="entry name" value="G3P_acyltransf"/>
    <property type="match status" value="1"/>
</dbReference>
<gene>
    <name evidence="1" type="primary">plsY</name>
    <name type="ordered locus">CD630_26310</name>
</gene>
<sequence>MEIFSYIIIAVVAYLLGNISTSYIVAKRIAGVDIRTQGSGNAGSTNVLRTLGKRAGAMTFLGDVLKGVMAVLISEFAARLVGIDTLLAGYLAVICVVAGHNWPAVLGFRGGKGVATSLGAMLAVNPVITLMCLAVFILVVAITKYVSLGSVVGIGCSPIFMIMVKNKAGLIVALFLTASVIYNHRANIKRLLNGTERKIGQKKE</sequence>
<feature type="chain" id="PRO_1000064168" description="Glycerol-3-phosphate acyltransferase">
    <location>
        <begin position="1"/>
        <end position="204"/>
    </location>
</feature>
<feature type="transmembrane region" description="Helical" evidence="1">
    <location>
        <begin position="6"/>
        <end position="26"/>
    </location>
</feature>
<feature type="transmembrane region" description="Helical" evidence="1">
    <location>
        <begin position="80"/>
        <end position="100"/>
    </location>
</feature>
<feature type="transmembrane region" description="Helical" evidence="1">
    <location>
        <begin position="122"/>
        <end position="142"/>
    </location>
</feature>
<feature type="transmembrane region" description="Helical" evidence="1">
    <location>
        <begin position="144"/>
        <end position="164"/>
    </location>
</feature>
<feature type="transmembrane region" description="Helical" evidence="1">
    <location>
        <begin position="168"/>
        <end position="188"/>
    </location>
</feature>
<protein>
    <recommendedName>
        <fullName evidence="1">Glycerol-3-phosphate acyltransferase</fullName>
    </recommendedName>
    <alternativeName>
        <fullName evidence="1">Acyl-PO4 G3P acyltransferase</fullName>
    </alternativeName>
    <alternativeName>
        <fullName evidence="1">Acyl-phosphate--glycerol-3-phosphate acyltransferase</fullName>
    </alternativeName>
    <alternativeName>
        <fullName evidence="1">G3P acyltransferase</fullName>
        <shortName evidence="1">GPAT</shortName>
        <ecNumber evidence="1">2.3.1.275</ecNumber>
    </alternativeName>
    <alternativeName>
        <fullName evidence="1">Lysophosphatidic acid synthase</fullName>
        <shortName evidence="1">LPA synthase</shortName>
    </alternativeName>
</protein>
<keyword id="KW-1003">Cell membrane</keyword>
<keyword id="KW-0444">Lipid biosynthesis</keyword>
<keyword id="KW-0443">Lipid metabolism</keyword>
<keyword id="KW-0472">Membrane</keyword>
<keyword id="KW-0594">Phospholipid biosynthesis</keyword>
<keyword id="KW-1208">Phospholipid metabolism</keyword>
<keyword id="KW-1185">Reference proteome</keyword>
<keyword id="KW-0808">Transferase</keyword>
<keyword id="KW-0812">Transmembrane</keyword>
<keyword id="KW-1133">Transmembrane helix</keyword>
<reference key="1">
    <citation type="journal article" date="2006" name="Nat. Genet.">
        <title>The multidrug-resistant human pathogen Clostridium difficile has a highly mobile, mosaic genome.</title>
        <authorList>
            <person name="Sebaihia M."/>
            <person name="Wren B.W."/>
            <person name="Mullany P."/>
            <person name="Fairweather N.F."/>
            <person name="Minton N."/>
            <person name="Stabler R."/>
            <person name="Thomson N.R."/>
            <person name="Roberts A.P."/>
            <person name="Cerdeno-Tarraga A.M."/>
            <person name="Wang H."/>
            <person name="Holden M.T.G."/>
            <person name="Wright A."/>
            <person name="Churcher C."/>
            <person name="Quail M.A."/>
            <person name="Baker S."/>
            <person name="Bason N."/>
            <person name="Brooks K."/>
            <person name="Chillingworth T."/>
            <person name="Cronin A."/>
            <person name="Davis P."/>
            <person name="Dowd L."/>
            <person name="Fraser A."/>
            <person name="Feltwell T."/>
            <person name="Hance Z."/>
            <person name="Holroyd S."/>
            <person name="Jagels K."/>
            <person name="Moule S."/>
            <person name="Mungall K."/>
            <person name="Price C."/>
            <person name="Rabbinowitsch E."/>
            <person name="Sharp S."/>
            <person name="Simmonds M."/>
            <person name="Stevens K."/>
            <person name="Unwin L."/>
            <person name="Whithead S."/>
            <person name="Dupuy B."/>
            <person name="Dougan G."/>
            <person name="Barrell B."/>
            <person name="Parkhill J."/>
        </authorList>
    </citation>
    <scope>NUCLEOTIDE SEQUENCE [LARGE SCALE GENOMIC DNA]</scope>
    <source>
        <strain>630</strain>
    </source>
</reference>
<organism>
    <name type="scientific">Clostridioides difficile (strain 630)</name>
    <name type="common">Peptoclostridium difficile</name>
    <dbReference type="NCBI Taxonomy" id="272563"/>
    <lineage>
        <taxon>Bacteria</taxon>
        <taxon>Bacillati</taxon>
        <taxon>Bacillota</taxon>
        <taxon>Clostridia</taxon>
        <taxon>Peptostreptococcales</taxon>
        <taxon>Peptostreptococcaceae</taxon>
        <taxon>Clostridioides</taxon>
    </lineage>
</organism>
<comment type="function">
    <text evidence="1">Catalyzes the transfer of an acyl group from acyl-phosphate (acyl-PO(4)) to glycerol-3-phosphate (G3P) to form lysophosphatidic acid (LPA). This enzyme utilizes acyl-phosphate as fatty acyl donor, but not acyl-CoA or acyl-ACP.</text>
</comment>
<comment type="catalytic activity">
    <reaction evidence="1">
        <text>an acyl phosphate + sn-glycerol 3-phosphate = a 1-acyl-sn-glycero-3-phosphate + phosphate</text>
        <dbReference type="Rhea" id="RHEA:34075"/>
        <dbReference type="ChEBI" id="CHEBI:43474"/>
        <dbReference type="ChEBI" id="CHEBI:57597"/>
        <dbReference type="ChEBI" id="CHEBI:57970"/>
        <dbReference type="ChEBI" id="CHEBI:59918"/>
        <dbReference type="EC" id="2.3.1.275"/>
    </reaction>
</comment>
<comment type="pathway">
    <text evidence="1">Lipid metabolism; phospholipid metabolism.</text>
</comment>
<comment type="subunit">
    <text evidence="1">Probably interacts with PlsX.</text>
</comment>
<comment type="subcellular location">
    <subcellularLocation>
        <location evidence="1">Cell membrane</location>
        <topology evidence="1">Multi-pass membrane protein</topology>
    </subcellularLocation>
</comment>
<comment type="similarity">
    <text evidence="1">Belongs to the PlsY family.</text>
</comment>
<proteinExistence type="inferred from homology"/>